<name>ARLY_STAAW</name>
<reference key="1">
    <citation type="journal article" date="2002" name="Lancet">
        <title>Genome and virulence determinants of high virulence community-acquired MRSA.</title>
        <authorList>
            <person name="Baba T."/>
            <person name="Takeuchi F."/>
            <person name="Kuroda M."/>
            <person name="Yuzawa H."/>
            <person name="Aoki K."/>
            <person name="Oguchi A."/>
            <person name="Nagai Y."/>
            <person name="Iwama N."/>
            <person name="Asano K."/>
            <person name="Naimi T."/>
            <person name="Kuroda H."/>
            <person name="Cui L."/>
            <person name="Yamamoto K."/>
            <person name="Hiramatsu K."/>
        </authorList>
    </citation>
    <scope>NUCLEOTIDE SEQUENCE [LARGE SCALE GENOMIC DNA]</scope>
    <source>
        <strain>MW2</strain>
    </source>
</reference>
<feature type="chain" id="PRO_0000137826" description="Argininosuccinate lyase">
    <location>
        <begin position="1"/>
        <end position="459"/>
    </location>
</feature>
<accession>Q8NXF3</accession>
<proteinExistence type="inferred from homology"/>
<sequence length="459" mass="52016">MSNKAWGGRFEVQPEEWVDDFNASITFDQTLINQDIEGSIAHATMLANQGIISQQDSEQIIQGLKSIQHDYHQDQIQFSASLEDIHLNIEHELIKRIGDAGGKLHTGRSRNDQVATDMHLYTKKQVQDIIALIKSLQSVIVDIASNNVDTIMPGYTHLQRAQPISFAHHIMTYFWMLQRDQQRFEDSLKRIDINPLGAAALSGTTYPIDRHETTALLNFGSLYENSLDAVSDRDYIIETLHNISLTMVHLSRFAEEIIFWSTDEAKFITLSDAFSTGSSIMPQKKNPDMAELIRGKVGRTTGHLMSMLMTLKGLPLAYNKDMQEDKEGLFDAVHTIKGSLRIFEGMIQTMTINKERLNQTVKEDFSNATELADYLVTKNIPFRTAHEIVGKIVLECIQQGHYLLDVPLATYQQHHSSIDADIYDYLQPENCLKRRQSYGSTGQSSVKQQLDVAKQLLSQ</sequence>
<protein>
    <recommendedName>
        <fullName evidence="1">Argininosuccinate lyase</fullName>
        <shortName evidence="1">ASAL</shortName>
        <ecNumber evidence="1">4.3.2.1</ecNumber>
    </recommendedName>
    <alternativeName>
        <fullName evidence="1">Arginosuccinase</fullName>
    </alternativeName>
</protein>
<organism>
    <name type="scientific">Staphylococcus aureus (strain MW2)</name>
    <dbReference type="NCBI Taxonomy" id="196620"/>
    <lineage>
        <taxon>Bacteria</taxon>
        <taxon>Bacillati</taxon>
        <taxon>Bacillota</taxon>
        <taxon>Bacilli</taxon>
        <taxon>Bacillales</taxon>
        <taxon>Staphylococcaceae</taxon>
        <taxon>Staphylococcus</taxon>
    </lineage>
</organism>
<evidence type="ECO:0000255" key="1">
    <source>
        <dbReference type="HAMAP-Rule" id="MF_00006"/>
    </source>
</evidence>
<gene>
    <name evidence="1" type="primary">argH</name>
    <name type="ordered locus">MW0842</name>
</gene>
<comment type="catalytic activity">
    <reaction evidence="1">
        <text>2-(N(omega)-L-arginino)succinate = fumarate + L-arginine</text>
        <dbReference type="Rhea" id="RHEA:24020"/>
        <dbReference type="ChEBI" id="CHEBI:29806"/>
        <dbReference type="ChEBI" id="CHEBI:32682"/>
        <dbReference type="ChEBI" id="CHEBI:57472"/>
        <dbReference type="EC" id="4.3.2.1"/>
    </reaction>
</comment>
<comment type="pathway">
    <text evidence="1">Amino-acid biosynthesis; L-arginine biosynthesis; L-arginine from L-ornithine and carbamoyl phosphate: step 3/3.</text>
</comment>
<comment type="subcellular location">
    <subcellularLocation>
        <location evidence="1">Cytoplasm</location>
    </subcellularLocation>
</comment>
<comment type="similarity">
    <text evidence="1">Belongs to the lyase 1 family. Argininosuccinate lyase subfamily.</text>
</comment>
<dbReference type="EC" id="4.3.2.1" evidence="1"/>
<dbReference type="EMBL" id="BA000033">
    <property type="protein sequence ID" value="BAB94707.1"/>
    <property type="molecule type" value="Genomic_DNA"/>
</dbReference>
<dbReference type="RefSeq" id="WP_000066067.1">
    <property type="nucleotide sequence ID" value="NC_003923.1"/>
</dbReference>
<dbReference type="SMR" id="Q8NXF3"/>
<dbReference type="KEGG" id="sam:MW0842"/>
<dbReference type="HOGENOM" id="CLU_027272_2_3_9"/>
<dbReference type="UniPathway" id="UPA00068">
    <property type="reaction ID" value="UER00114"/>
</dbReference>
<dbReference type="GO" id="GO:0005829">
    <property type="term" value="C:cytosol"/>
    <property type="evidence" value="ECO:0007669"/>
    <property type="project" value="TreeGrafter"/>
</dbReference>
<dbReference type="GO" id="GO:0004056">
    <property type="term" value="F:argininosuccinate lyase activity"/>
    <property type="evidence" value="ECO:0007669"/>
    <property type="project" value="UniProtKB-UniRule"/>
</dbReference>
<dbReference type="GO" id="GO:0042450">
    <property type="term" value="P:arginine biosynthetic process via ornithine"/>
    <property type="evidence" value="ECO:0007669"/>
    <property type="project" value="InterPro"/>
</dbReference>
<dbReference type="GO" id="GO:0006526">
    <property type="term" value="P:L-arginine biosynthetic process"/>
    <property type="evidence" value="ECO:0007669"/>
    <property type="project" value="UniProtKB-UniRule"/>
</dbReference>
<dbReference type="CDD" id="cd01359">
    <property type="entry name" value="Argininosuccinate_lyase"/>
    <property type="match status" value="1"/>
</dbReference>
<dbReference type="FunFam" id="1.10.275.10:FF:000002">
    <property type="entry name" value="Argininosuccinate lyase"/>
    <property type="match status" value="1"/>
</dbReference>
<dbReference type="FunFam" id="1.10.40.30:FF:000001">
    <property type="entry name" value="Argininosuccinate lyase"/>
    <property type="match status" value="1"/>
</dbReference>
<dbReference type="FunFam" id="1.20.200.10:FF:000006">
    <property type="entry name" value="Argininosuccinate lyase"/>
    <property type="match status" value="1"/>
</dbReference>
<dbReference type="Gene3D" id="1.10.40.30">
    <property type="entry name" value="Fumarase/aspartase (C-terminal domain)"/>
    <property type="match status" value="1"/>
</dbReference>
<dbReference type="Gene3D" id="1.20.200.10">
    <property type="entry name" value="Fumarase/aspartase (Central domain)"/>
    <property type="match status" value="1"/>
</dbReference>
<dbReference type="Gene3D" id="1.10.275.10">
    <property type="entry name" value="Fumarase/aspartase (N-terminal domain)"/>
    <property type="match status" value="1"/>
</dbReference>
<dbReference type="HAMAP" id="MF_00006">
    <property type="entry name" value="Arg_succ_lyase"/>
    <property type="match status" value="1"/>
</dbReference>
<dbReference type="InterPro" id="IPR029419">
    <property type="entry name" value="Arg_succ_lyase_C"/>
</dbReference>
<dbReference type="InterPro" id="IPR009049">
    <property type="entry name" value="Argininosuccinate_lyase"/>
</dbReference>
<dbReference type="InterPro" id="IPR024083">
    <property type="entry name" value="Fumarase/histidase_N"/>
</dbReference>
<dbReference type="InterPro" id="IPR020557">
    <property type="entry name" value="Fumarate_lyase_CS"/>
</dbReference>
<dbReference type="InterPro" id="IPR000362">
    <property type="entry name" value="Fumarate_lyase_fam"/>
</dbReference>
<dbReference type="InterPro" id="IPR022761">
    <property type="entry name" value="Fumarate_lyase_N"/>
</dbReference>
<dbReference type="InterPro" id="IPR008948">
    <property type="entry name" value="L-Aspartase-like"/>
</dbReference>
<dbReference type="NCBIfam" id="TIGR00838">
    <property type="entry name" value="argH"/>
    <property type="match status" value="1"/>
</dbReference>
<dbReference type="PANTHER" id="PTHR43814">
    <property type="entry name" value="ARGININOSUCCINATE LYASE"/>
    <property type="match status" value="1"/>
</dbReference>
<dbReference type="PANTHER" id="PTHR43814:SF1">
    <property type="entry name" value="ARGININOSUCCINATE LYASE"/>
    <property type="match status" value="1"/>
</dbReference>
<dbReference type="Pfam" id="PF14698">
    <property type="entry name" value="ASL_C2"/>
    <property type="match status" value="1"/>
</dbReference>
<dbReference type="Pfam" id="PF00206">
    <property type="entry name" value="Lyase_1"/>
    <property type="match status" value="1"/>
</dbReference>
<dbReference type="PRINTS" id="PR00145">
    <property type="entry name" value="ARGSUCLYASE"/>
</dbReference>
<dbReference type="PRINTS" id="PR00149">
    <property type="entry name" value="FUMRATELYASE"/>
</dbReference>
<dbReference type="SUPFAM" id="SSF48557">
    <property type="entry name" value="L-aspartase-like"/>
    <property type="match status" value="1"/>
</dbReference>
<dbReference type="PROSITE" id="PS00163">
    <property type="entry name" value="FUMARATE_LYASES"/>
    <property type="match status" value="1"/>
</dbReference>
<keyword id="KW-0028">Amino-acid biosynthesis</keyword>
<keyword id="KW-0055">Arginine biosynthesis</keyword>
<keyword id="KW-0963">Cytoplasm</keyword>
<keyword id="KW-0456">Lyase</keyword>